<proteinExistence type="evidence at transcript level"/>
<evidence type="ECO:0000250" key="1"/>
<evidence type="ECO:0000250" key="2">
    <source>
        <dbReference type="UniProtKB" id="P31150"/>
    </source>
</evidence>
<evidence type="ECO:0000305" key="3"/>
<protein>
    <recommendedName>
        <fullName>Rab GDP dissociation inhibitor alpha</fullName>
        <shortName>Rab GDI alpha</shortName>
    </recommendedName>
    <alternativeName>
        <fullName>Guanosine diphosphate dissociation inhibitor 1</fullName>
        <shortName>GDI-1</shortName>
    </alternativeName>
</protein>
<sequence length="447" mass="50627">MDEEYDVIVLGTGLTECILSGIMSVNGKKVLHMDRNPYYGGESSSITPLEELYKRFQLLEGPPESMGRGRDWNVDLIPKFLMANGQLVKMLLYTEVTRYLDFKVVEGSFVYKGGKIYKVPSTETEALASNLMGMFEKRRFRKFLVFVANFDENDPKTFEGVDPQTTSMRDVYRKFDLGQDVIDFTGHALALYRTDDYLDQPCLETINRIKLYSESLARYGKSPYLYPLYGLGELPQGFARLSAIYGGTYMLNKPVDDIIMENGKVVGVKSEGEVARCKQLICDPSYIPDRVRKAGQVIRIICILSHPIKNTNDANSCQIIIPQNQVNRKSDIYVCMISYAHNVAAQGKYIAIASTTVETTDPEKEVEPALELLEPIDQKFVAISDLYEPIDDGCESQVFCSCSYDATTHFETTCNDIKDIYKRMAGMAFDFENMKRKQNDVFGEAEQ</sequence>
<gene>
    <name type="primary">GDI1</name>
    <name type="ORF">QccE-14140</name>
    <name type="ORF">QccE-14779</name>
</gene>
<reference key="1">
    <citation type="submission" date="2002-04" db="EMBL/GenBank/DDBJ databases">
        <title>Isolation and characterization of cDNA for macaque neurological disease genes.</title>
        <authorList>
            <person name="Kusuda J."/>
            <person name="Osada N."/>
            <person name="Hida M."/>
            <person name="Sugano S."/>
            <person name="Hashimoto K."/>
        </authorList>
    </citation>
    <scope>NUCLEOTIDE SEQUENCE [LARGE SCALE MRNA]</scope>
    <source>
        <tissue>Brain cortex</tissue>
    </source>
</reference>
<reference key="2">
    <citation type="submission" date="2005-06" db="EMBL/GenBank/DDBJ databases">
        <title>DNA sequences of macaque genes expressed in brain or testis and its evolutionary implications.</title>
        <authorList>
            <consortium name="International consortium for macaque cDNA sequencing and analysis"/>
        </authorList>
    </citation>
    <scope>NUCLEOTIDE SEQUENCE [LARGE SCALE MRNA]</scope>
    <source>
        <tissue>Brain cortex</tissue>
    </source>
</reference>
<organism>
    <name type="scientific">Macaca fascicularis</name>
    <name type="common">Crab-eating macaque</name>
    <name type="synonym">Cynomolgus monkey</name>
    <dbReference type="NCBI Taxonomy" id="9541"/>
    <lineage>
        <taxon>Eukaryota</taxon>
        <taxon>Metazoa</taxon>
        <taxon>Chordata</taxon>
        <taxon>Craniata</taxon>
        <taxon>Vertebrata</taxon>
        <taxon>Euteleostomi</taxon>
        <taxon>Mammalia</taxon>
        <taxon>Eutheria</taxon>
        <taxon>Euarchontoglires</taxon>
        <taxon>Primates</taxon>
        <taxon>Haplorrhini</taxon>
        <taxon>Catarrhini</taxon>
        <taxon>Cercopithecidae</taxon>
        <taxon>Cercopithecinae</taxon>
        <taxon>Macaca</taxon>
    </lineage>
</organism>
<name>GDIA_MACFA</name>
<keyword id="KW-0963">Cytoplasm</keyword>
<keyword id="KW-0333">Golgi apparatus</keyword>
<keyword id="KW-0343">GTPase activation</keyword>
<keyword id="KW-1185">Reference proteome</keyword>
<feature type="chain" id="PRO_0000056672" description="Rab GDP dissociation inhibitor alpha">
    <location>
        <begin position="1"/>
        <end position="447"/>
    </location>
</feature>
<comment type="function">
    <text evidence="1">Regulates the GDP/GTP exchange reaction of most Rab proteins by inhibiting the dissociation of GDP from them, and the subsequent binding of GTP to them. Promotes the dissociation of GDP-bound Rab proteins from the membrane and inhibits their activation. Promotes the dissociation of RAB1A, RAB3A, RAB5A and RAB10 from membranes (By similarity).</text>
</comment>
<comment type="subunit">
    <text evidence="2">Interacts with RHOH (By similarity). Interacts with the non-phosphorylated forms of RAB1A, RAB3A, RAB5A, RAB5B, RAB5C, RAB8A, RAB8B, RAB10, RAB12, RAB35, and RAB43 (By similarity).</text>
</comment>
<comment type="subcellular location">
    <subcellularLocation>
        <location evidence="1">Cytoplasm</location>
    </subcellularLocation>
    <subcellularLocation>
        <location evidence="1">Golgi apparatus</location>
        <location evidence="1">trans-Golgi network</location>
    </subcellularLocation>
</comment>
<comment type="similarity">
    <text evidence="3">Belongs to the Rab GDI family.</text>
</comment>
<dbReference type="EMBL" id="AB083312">
    <property type="protein sequence ID" value="BAC20591.1"/>
    <property type="molecule type" value="mRNA"/>
</dbReference>
<dbReference type="EMBL" id="AB169658">
    <property type="protein sequence ID" value="BAE01739.1"/>
    <property type="molecule type" value="mRNA"/>
</dbReference>
<dbReference type="RefSeq" id="NP_001270147.1">
    <property type="nucleotide sequence ID" value="NM_001283218.2"/>
</dbReference>
<dbReference type="SMR" id="Q8HXX7"/>
<dbReference type="STRING" id="9541.ENSMFAP00000032441"/>
<dbReference type="GeneID" id="102142996"/>
<dbReference type="KEGG" id="mcf:102142996"/>
<dbReference type="CTD" id="2664"/>
<dbReference type="VEuPathDB" id="HostDB:ENSMFAG00000037198"/>
<dbReference type="eggNOG" id="KOG1439">
    <property type="taxonomic scope" value="Eukaryota"/>
</dbReference>
<dbReference type="OMA" id="GRICKVP"/>
<dbReference type="OrthoDB" id="5614at314294"/>
<dbReference type="Proteomes" id="UP000233100">
    <property type="component" value="Chromosome X"/>
</dbReference>
<dbReference type="GO" id="GO:0005794">
    <property type="term" value="C:Golgi apparatus"/>
    <property type="evidence" value="ECO:0007669"/>
    <property type="project" value="UniProtKB-SubCell"/>
</dbReference>
<dbReference type="GO" id="GO:0005096">
    <property type="term" value="F:GTPase activator activity"/>
    <property type="evidence" value="ECO:0007669"/>
    <property type="project" value="UniProtKB-KW"/>
</dbReference>
<dbReference type="GO" id="GO:0005093">
    <property type="term" value="F:Rab GDP-dissociation inhibitor activity"/>
    <property type="evidence" value="ECO:0000250"/>
    <property type="project" value="UniProtKB"/>
</dbReference>
<dbReference type="GO" id="GO:0050771">
    <property type="term" value="P:negative regulation of axonogenesis"/>
    <property type="evidence" value="ECO:0000250"/>
    <property type="project" value="UniProtKB"/>
</dbReference>
<dbReference type="GO" id="GO:0090315">
    <property type="term" value="P:negative regulation of protein targeting to membrane"/>
    <property type="evidence" value="ECO:0000250"/>
    <property type="project" value="UniProtKB"/>
</dbReference>
<dbReference type="GO" id="GO:0015031">
    <property type="term" value="P:protein transport"/>
    <property type="evidence" value="ECO:0007669"/>
    <property type="project" value="InterPro"/>
</dbReference>
<dbReference type="GO" id="GO:0032482">
    <property type="term" value="P:Rab protein signal transduction"/>
    <property type="evidence" value="ECO:0000250"/>
    <property type="project" value="UniProtKB"/>
</dbReference>
<dbReference type="GO" id="GO:0016192">
    <property type="term" value="P:vesicle-mediated transport"/>
    <property type="evidence" value="ECO:0007669"/>
    <property type="project" value="TreeGrafter"/>
</dbReference>
<dbReference type="FunFam" id="1.10.405.10:FF:000001">
    <property type="entry name" value="Rab GDP dissociation inhibitor"/>
    <property type="match status" value="1"/>
</dbReference>
<dbReference type="FunFam" id="3.30.519.10:FF:000005">
    <property type="entry name" value="Rab GDP dissociation inhibitor"/>
    <property type="match status" value="1"/>
</dbReference>
<dbReference type="FunFam" id="3.30.519.10:FF:000014">
    <property type="entry name" value="Rab GDP dissociation inhibitor"/>
    <property type="match status" value="1"/>
</dbReference>
<dbReference type="FunFam" id="3.50.50.60:FF:000158">
    <property type="entry name" value="Rab GDP dissociation inhibitor"/>
    <property type="match status" value="1"/>
</dbReference>
<dbReference type="FunFam" id="3.50.50.60:FF:000232">
    <property type="entry name" value="Rab GDP dissociation inhibitor"/>
    <property type="match status" value="1"/>
</dbReference>
<dbReference type="Gene3D" id="3.50.50.60">
    <property type="entry name" value="FAD/NAD(P)-binding domain"/>
    <property type="match status" value="1"/>
</dbReference>
<dbReference type="Gene3D" id="1.10.405.10">
    <property type="entry name" value="Guanine Nucleotide Dissociation Inhibitor, domain 1"/>
    <property type="match status" value="1"/>
</dbReference>
<dbReference type="Gene3D" id="3.30.519.10">
    <property type="entry name" value="Guanine Nucleotide Dissociation Inhibitor, domain 2"/>
    <property type="match status" value="1"/>
</dbReference>
<dbReference type="InterPro" id="IPR036188">
    <property type="entry name" value="FAD/NAD-bd_sf"/>
</dbReference>
<dbReference type="InterPro" id="IPR018203">
    <property type="entry name" value="GDP_dissociation_inhibitor"/>
</dbReference>
<dbReference type="InterPro" id="IPR000806">
    <property type="entry name" value="RabGDI"/>
</dbReference>
<dbReference type="PANTHER" id="PTHR11787:SF3">
    <property type="entry name" value="RAB GDP DISSOCIATION INHIBITOR ALPHA"/>
    <property type="match status" value="1"/>
</dbReference>
<dbReference type="PANTHER" id="PTHR11787">
    <property type="entry name" value="RAB GDP-DISSOCIATION INHIBITOR"/>
    <property type="match status" value="1"/>
</dbReference>
<dbReference type="Pfam" id="PF00996">
    <property type="entry name" value="GDI"/>
    <property type="match status" value="1"/>
</dbReference>
<dbReference type="PRINTS" id="PR00892">
    <property type="entry name" value="RABGDI"/>
</dbReference>
<dbReference type="PRINTS" id="PR00891">
    <property type="entry name" value="RABGDIREP"/>
</dbReference>
<dbReference type="SUPFAM" id="SSF51905">
    <property type="entry name" value="FAD/NAD(P)-binding domain"/>
    <property type="match status" value="2"/>
</dbReference>
<accession>Q8HXX7</accession>
<accession>Q4R586</accession>